<keyword id="KW-0997">Cell inner membrane</keyword>
<keyword id="KW-1003">Cell membrane</keyword>
<keyword id="KW-0444">Lipid biosynthesis</keyword>
<keyword id="KW-0443">Lipid metabolism</keyword>
<keyword id="KW-0472">Membrane</keyword>
<keyword id="KW-0594">Phospholipid biosynthesis</keyword>
<keyword id="KW-1208">Phospholipid metabolism</keyword>
<keyword id="KW-1185">Reference proteome</keyword>
<keyword id="KW-0808">Transferase</keyword>
<keyword id="KW-0812">Transmembrane</keyword>
<keyword id="KW-1133">Transmembrane helix</keyword>
<reference key="1">
    <citation type="journal article" date="2002" name="Environ. Microbiol.">
        <title>Complete genome sequence and comparative analysis of the metabolically versatile Pseudomonas putida KT2440.</title>
        <authorList>
            <person name="Nelson K.E."/>
            <person name="Weinel C."/>
            <person name="Paulsen I.T."/>
            <person name="Dodson R.J."/>
            <person name="Hilbert H."/>
            <person name="Martins dos Santos V.A.P."/>
            <person name="Fouts D.E."/>
            <person name="Gill S.R."/>
            <person name="Pop M."/>
            <person name="Holmes M."/>
            <person name="Brinkac L.M."/>
            <person name="Beanan M.J."/>
            <person name="DeBoy R.T."/>
            <person name="Daugherty S.C."/>
            <person name="Kolonay J.F."/>
            <person name="Madupu R."/>
            <person name="Nelson W.C."/>
            <person name="White O."/>
            <person name="Peterson J.D."/>
            <person name="Khouri H.M."/>
            <person name="Hance I."/>
            <person name="Chris Lee P."/>
            <person name="Holtzapple E.K."/>
            <person name="Scanlan D."/>
            <person name="Tran K."/>
            <person name="Moazzez A."/>
            <person name="Utterback T.R."/>
            <person name="Rizzo M."/>
            <person name="Lee K."/>
            <person name="Kosack D."/>
            <person name="Moestl D."/>
            <person name="Wedler H."/>
            <person name="Lauber J."/>
            <person name="Stjepandic D."/>
            <person name="Hoheisel J."/>
            <person name="Straetz M."/>
            <person name="Heim S."/>
            <person name="Kiewitz C."/>
            <person name="Eisen J.A."/>
            <person name="Timmis K.N."/>
            <person name="Duesterhoeft A."/>
            <person name="Tuemmler B."/>
            <person name="Fraser C.M."/>
        </authorList>
    </citation>
    <scope>NUCLEOTIDE SEQUENCE [LARGE SCALE GENOMIC DNA]</scope>
    <source>
        <strain>ATCC 47054 / DSM 6125 / CFBP 8728 / NCIMB 11950 / KT2440</strain>
    </source>
</reference>
<accession>Q88QU5</accession>
<gene>
    <name evidence="1" type="primary">plsY</name>
    <name type="ordered locus">PP_0391</name>
</gene>
<protein>
    <recommendedName>
        <fullName evidence="1">Glycerol-3-phosphate acyltransferase</fullName>
    </recommendedName>
    <alternativeName>
        <fullName evidence="1">Acyl-PO4 G3P acyltransferase</fullName>
    </alternativeName>
    <alternativeName>
        <fullName evidence="1">Acyl-phosphate--glycerol-3-phosphate acyltransferase</fullName>
    </alternativeName>
    <alternativeName>
        <fullName evidence="1">G3P acyltransferase</fullName>
        <shortName evidence="1">GPAT</shortName>
        <ecNumber evidence="1">2.3.1.275</ecNumber>
    </alternativeName>
    <alternativeName>
        <fullName evidence="1">Lysophosphatidic acid synthase</fullName>
        <shortName evidence="1">LPA synthase</shortName>
    </alternativeName>
</protein>
<feature type="chain" id="PRO_0000188430" description="Glycerol-3-phosphate acyltransferase">
    <location>
        <begin position="1"/>
        <end position="189"/>
    </location>
</feature>
<feature type="transmembrane region" description="Helical" evidence="1">
    <location>
        <begin position="1"/>
        <end position="21"/>
    </location>
</feature>
<feature type="transmembrane region" description="Helical" evidence="1">
    <location>
        <begin position="50"/>
        <end position="70"/>
    </location>
</feature>
<feature type="transmembrane region" description="Helical" evidence="1">
    <location>
        <begin position="77"/>
        <end position="97"/>
    </location>
</feature>
<feature type="transmembrane region" description="Helical" evidence="1">
    <location>
        <begin position="111"/>
        <end position="131"/>
    </location>
</feature>
<feature type="transmembrane region" description="Helical" evidence="1">
    <location>
        <begin position="151"/>
        <end position="171"/>
    </location>
</feature>
<evidence type="ECO:0000255" key="1">
    <source>
        <dbReference type="HAMAP-Rule" id="MF_01043"/>
    </source>
</evidence>
<comment type="function">
    <text evidence="1">Catalyzes the transfer of an acyl group from acyl-phosphate (acyl-PO(4)) to glycerol-3-phosphate (G3P) to form lysophosphatidic acid (LPA). This enzyme utilizes acyl-phosphate as fatty acyl donor, but not acyl-CoA or acyl-ACP.</text>
</comment>
<comment type="catalytic activity">
    <reaction evidence="1">
        <text>an acyl phosphate + sn-glycerol 3-phosphate = a 1-acyl-sn-glycero-3-phosphate + phosphate</text>
        <dbReference type="Rhea" id="RHEA:34075"/>
        <dbReference type="ChEBI" id="CHEBI:43474"/>
        <dbReference type="ChEBI" id="CHEBI:57597"/>
        <dbReference type="ChEBI" id="CHEBI:57970"/>
        <dbReference type="ChEBI" id="CHEBI:59918"/>
        <dbReference type="EC" id="2.3.1.275"/>
    </reaction>
</comment>
<comment type="pathway">
    <text evidence="1">Lipid metabolism; phospholipid metabolism.</text>
</comment>
<comment type="subunit">
    <text evidence="1">Probably interacts with PlsX.</text>
</comment>
<comment type="subcellular location">
    <subcellularLocation>
        <location evidence="1">Cell inner membrane</location>
        <topology evidence="1">Multi-pass membrane protein</topology>
    </subcellularLocation>
</comment>
<comment type="similarity">
    <text evidence="1">Belongs to the PlsY family.</text>
</comment>
<proteinExistence type="inferred from homology"/>
<sequence length="189" mass="20394">MFWLLALLAYLLGSLSFAIVLSRLSGSPDPRSSGSGNAGATNMLRLAGRKLAILTLLGDLCKGLLPVLLARAAGLDLHAQAWVGICAVLGHLFPLYFRFKGGKGVATAAGMLMALYFPAALLAIGAWLLTFYLTRTSSLAALIATPLTLPLLAWREPEALLPISVLTVMIVWRHRNNLRDLFAGRERHF</sequence>
<dbReference type="EC" id="2.3.1.275" evidence="1"/>
<dbReference type="EMBL" id="AE015451">
    <property type="protein sequence ID" value="AAN66022.1"/>
    <property type="molecule type" value="Genomic_DNA"/>
</dbReference>
<dbReference type="RefSeq" id="NP_742558.1">
    <property type="nucleotide sequence ID" value="NC_002947.4"/>
</dbReference>
<dbReference type="RefSeq" id="WP_010951737.1">
    <property type="nucleotide sequence ID" value="NZ_CP169744.1"/>
</dbReference>
<dbReference type="SMR" id="Q88QU5"/>
<dbReference type="STRING" id="160488.PP_0391"/>
<dbReference type="PaxDb" id="160488-PP_0391"/>
<dbReference type="GeneID" id="83677682"/>
<dbReference type="KEGG" id="ppu:PP_0391"/>
<dbReference type="PATRIC" id="fig|160488.4.peg.421"/>
<dbReference type="eggNOG" id="COG0344">
    <property type="taxonomic scope" value="Bacteria"/>
</dbReference>
<dbReference type="HOGENOM" id="CLU_081254_0_0_6"/>
<dbReference type="OrthoDB" id="9777124at2"/>
<dbReference type="PhylomeDB" id="Q88QU5"/>
<dbReference type="BioCyc" id="PPUT160488:G1G01-428-MONOMER"/>
<dbReference type="UniPathway" id="UPA00085"/>
<dbReference type="Proteomes" id="UP000000556">
    <property type="component" value="Chromosome"/>
</dbReference>
<dbReference type="GO" id="GO:0005886">
    <property type="term" value="C:plasma membrane"/>
    <property type="evidence" value="ECO:0007669"/>
    <property type="project" value="UniProtKB-SubCell"/>
</dbReference>
<dbReference type="GO" id="GO:0043772">
    <property type="term" value="F:acyl-phosphate glycerol-3-phosphate acyltransferase activity"/>
    <property type="evidence" value="ECO:0007669"/>
    <property type="project" value="UniProtKB-UniRule"/>
</dbReference>
<dbReference type="GO" id="GO:0008654">
    <property type="term" value="P:phospholipid biosynthetic process"/>
    <property type="evidence" value="ECO:0007669"/>
    <property type="project" value="UniProtKB-UniRule"/>
</dbReference>
<dbReference type="HAMAP" id="MF_01043">
    <property type="entry name" value="PlsY"/>
    <property type="match status" value="1"/>
</dbReference>
<dbReference type="InterPro" id="IPR003811">
    <property type="entry name" value="G3P_acylTferase_PlsY"/>
</dbReference>
<dbReference type="NCBIfam" id="TIGR00023">
    <property type="entry name" value="glycerol-3-phosphate 1-O-acyltransferase PlsY"/>
    <property type="match status" value="1"/>
</dbReference>
<dbReference type="PANTHER" id="PTHR30309:SF0">
    <property type="entry name" value="GLYCEROL-3-PHOSPHATE ACYLTRANSFERASE-RELATED"/>
    <property type="match status" value="1"/>
</dbReference>
<dbReference type="PANTHER" id="PTHR30309">
    <property type="entry name" value="INNER MEMBRANE PROTEIN YGIH"/>
    <property type="match status" value="1"/>
</dbReference>
<dbReference type="Pfam" id="PF02660">
    <property type="entry name" value="G3P_acyltransf"/>
    <property type="match status" value="1"/>
</dbReference>
<dbReference type="SMART" id="SM01207">
    <property type="entry name" value="G3P_acyltransf"/>
    <property type="match status" value="1"/>
</dbReference>
<organism>
    <name type="scientific">Pseudomonas putida (strain ATCC 47054 / DSM 6125 / CFBP 8728 / NCIMB 11950 / KT2440)</name>
    <dbReference type="NCBI Taxonomy" id="160488"/>
    <lineage>
        <taxon>Bacteria</taxon>
        <taxon>Pseudomonadati</taxon>
        <taxon>Pseudomonadota</taxon>
        <taxon>Gammaproteobacteria</taxon>
        <taxon>Pseudomonadales</taxon>
        <taxon>Pseudomonadaceae</taxon>
        <taxon>Pseudomonas</taxon>
    </lineage>
</organism>
<name>PLSY_PSEPK</name>